<comment type="function">
    <text evidence="1">Involved in peptide bond synthesis. Stimulates efficient translation and peptide-bond synthesis on native or reconstituted 70S ribosomes in vitro. Probably functions indirectly by altering the affinity of the ribosome for aminoacyl-tRNA, thus increasing their reactivity as acceptors for peptidyl transferase.</text>
</comment>
<comment type="pathway">
    <text evidence="1">Protein biosynthesis; polypeptide chain elongation.</text>
</comment>
<comment type="subcellular location">
    <subcellularLocation>
        <location evidence="1">Cytoplasm</location>
    </subcellularLocation>
</comment>
<comment type="similarity">
    <text evidence="1">Belongs to the elongation factor P family.</text>
</comment>
<sequence>MYSTTDFRKGLKIELDGTPFEIVDFQHFKPGKGGAMVRTKLRNILNGRVVDNTFRSGEKVGRPDLESRDMQYLYHEGDDLVLMDLTTYEQLYMHEDLTDGKAGFLKDGQQVRVLLYNGKPLDLELPVSLVLEVVETEPGAKGDTVSNVTKPAKLETGIVVQVPIFVNQGDRIKVDTRSREYLGRE</sequence>
<keyword id="KW-0963">Cytoplasm</keyword>
<keyword id="KW-0251">Elongation factor</keyword>
<keyword id="KW-0648">Protein biosynthesis</keyword>
<evidence type="ECO:0000255" key="1">
    <source>
        <dbReference type="HAMAP-Rule" id="MF_00141"/>
    </source>
</evidence>
<organism>
    <name type="scientific">Nitratidesulfovibrio vulgaris (strain DP4)</name>
    <name type="common">Desulfovibrio vulgaris</name>
    <dbReference type="NCBI Taxonomy" id="391774"/>
    <lineage>
        <taxon>Bacteria</taxon>
        <taxon>Pseudomonadati</taxon>
        <taxon>Thermodesulfobacteriota</taxon>
        <taxon>Desulfovibrionia</taxon>
        <taxon>Desulfovibrionales</taxon>
        <taxon>Desulfovibrionaceae</taxon>
        <taxon>Nitratidesulfovibrio</taxon>
    </lineage>
</organism>
<dbReference type="EMBL" id="CP000527">
    <property type="protein sequence ID" value="ABM28439.1"/>
    <property type="molecule type" value="Genomic_DNA"/>
</dbReference>
<dbReference type="RefSeq" id="WP_010938955.1">
    <property type="nucleotide sequence ID" value="NC_008751.1"/>
</dbReference>
<dbReference type="SMR" id="A1VDC3"/>
<dbReference type="KEGG" id="dvl:Dvul_1421"/>
<dbReference type="HOGENOM" id="CLU_074944_0_1_7"/>
<dbReference type="UniPathway" id="UPA00345"/>
<dbReference type="Proteomes" id="UP000009173">
    <property type="component" value="Chromosome"/>
</dbReference>
<dbReference type="GO" id="GO:0005737">
    <property type="term" value="C:cytoplasm"/>
    <property type="evidence" value="ECO:0007669"/>
    <property type="project" value="UniProtKB-SubCell"/>
</dbReference>
<dbReference type="GO" id="GO:0003746">
    <property type="term" value="F:translation elongation factor activity"/>
    <property type="evidence" value="ECO:0007669"/>
    <property type="project" value="UniProtKB-UniRule"/>
</dbReference>
<dbReference type="GO" id="GO:0043043">
    <property type="term" value="P:peptide biosynthetic process"/>
    <property type="evidence" value="ECO:0007669"/>
    <property type="project" value="InterPro"/>
</dbReference>
<dbReference type="CDD" id="cd04470">
    <property type="entry name" value="S1_EF-P_repeat_1"/>
    <property type="match status" value="1"/>
</dbReference>
<dbReference type="CDD" id="cd05794">
    <property type="entry name" value="S1_EF-P_repeat_2"/>
    <property type="match status" value="1"/>
</dbReference>
<dbReference type="FunFam" id="2.30.30.30:FF:000003">
    <property type="entry name" value="Elongation factor P"/>
    <property type="match status" value="1"/>
</dbReference>
<dbReference type="FunFam" id="2.40.50.140:FF:000004">
    <property type="entry name" value="Elongation factor P"/>
    <property type="match status" value="1"/>
</dbReference>
<dbReference type="FunFam" id="2.40.50.140:FF:000009">
    <property type="entry name" value="Elongation factor P"/>
    <property type="match status" value="1"/>
</dbReference>
<dbReference type="Gene3D" id="2.30.30.30">
    <property type="match status" value="1"/>
</dbReference>
<dbReference type="Gene3D" id="2.40.50.140">
    <property type="entry name" value="Nucleic acid-binding proteins"/>
    <property type="match status" value="2"/>
</dbReference>
<dbReference type="HAMAP" id="MF_00141">
    <property type="entry name" value="EF_P"/>
    <property type="match status" value="1"/>
</dbReference>
<dbReference type="InterPro" id="IPR015365">
    <property type="entry name" value="Elong-fact-P_C"/>
</dbReference>
<dbReference type="InterPro" id="IPR012340">
    <property type="entry name" value="NA-bd_OB-fold"/>
</dbReference>
<dbReference type="InterPro" id="IPR014722">
    <property type="entry name" value="Rib_uL2_dom2"/>
</dbReference>
<dbReference type="InterPro" id="IPR020599">
    <property type="entry name" value="Transl_elong_fac_P/YeiP"/>
</dbReference>
<dbReference type="InterPro" id="IPR013185">
    <property type="entry name" value="Transl_elong_KOW-like"/>
</dbReference>
<dbReference type="InterPro" id="IPR001059">
    <property type="entry name" value="Transl_elong_P/YeiP_cen"/>
</dbReference>
<dbReference type="InterPro" id="IPR013852">
    <property type="entry name" value="Transl_elong_P/YeiP_CS"/>
</dbReference>
<dbReference type="InterPro" id="IPR011768">
    <property type="entry name" value="Transl_elongation_fac_P"/>
</dbReference>
<dbReference type="InterPro" id="IPR008991">
    <property type="entry name" value="Translation_prot_SH3-like_sf"/>
</dbReference>
<dbReference type="NCBIfam" id="TIGR00038">
    <property type="entry name" value="efp"/>
    <property type="match status" value="1"/>
</dbReference>
<dbReference type="NCBIfam" id="NF001810">
    <property type="entry name" value="PRK00529.1"/>
    <property type="match status" value="1"/>
</dbReference>
<dbReference type="PANTHER" id="PTHR30053">
    <property type="entry name" value="ELONGATION FACTOR P"/>
    <property type="match status" value="1"/>
</dbReference>
<dbReference type="PANTHER" id="PTHR30053:SF12">
    <property type="entry name" value="ELONGATION FACTOR P (EF-P) FAMILY PROTEIN"/>
    <property type="match status" value="1"/>
</dbReference>
<dbReference type="Pfam" id="PF01132">
    <property type="entry name" value="EFP"/>
    <property type="match status" value="1"/>
</dbReference>
<dbReference type="Pfam" id="PF08207">
    <property type="entry name" value="EFP_N"/>
    <property type="match status" value="1"/>
</dbReference>
<dbReference type="Pfam" id="PF09285">
    <property type="entry name" value="Elong-fact-P_C"/>
    <property type="match status" value="1"/>
</dbReference>
<dbReference type="PIRSF" id="PIRSF005901">
    <property type="entry name" value="EF-P"/>
    <property type="match status" value="1"/>
</dbReference>
<dbReference type="SMART" id="SM01185">
    <property type="entry name" value="EFP"/>
    <property type="match status" value="1"/>
</dbReference>
<dbReference type="SMART" id="SM00841">
    <property type="entry name" value="Elong-fact-P_C"/>
    <property type="match status" value="1"/>
</dbReference>
<dbReference type="SUPFAM" id="SSF50249">
    <property type="entry name" value="Nucleic acid-binding proteins"/>
    <property type="match status" value="2"/>
</dbReference>
<dbReference type="SUPFAM" id="SSF50104">
    <property type="entry name" value="Translation proteins SH3-like domain"/>
    <property type="match status" value="1"/>
</dbReference>
<dbReference type="PROSITE" id="PS01275">
    <property type="entry name" value="EFP"/>
    <property type="match status" value="1"/>
</dbReference>
<name>EFP_NITV4</name>
<protein>
    <recommendedName>
        <fullName evidence="1">Elongation factor P</fullName>
        <shortName evidence="1">EF-P</shortName>
    </recommendedName>
</protein>
<gene>
    <name evidence="1" type="primary">efp</name>
    <name type="ordered locus">Dvul_1421</name>
</gene>
<feature type="chain" id="PRO_1000010732" description="Elongation factor P">
    <location>
        <begin position="1"/>
        <end position="185"/>
    </location>
</feature>
<proteinExistence type="inferred from homology"/>
<reference key="1">
    <citation type="journal article" date="2009" name="Environ. Microbiol.">
        <title>Contribution of mobile genetic elements to Desulfovibrio vulgaris genome plasticity.</title>
        <authorList>
            <person name="Walker C.B."/>
            <person name="Stolyar S."/>
            <person name="Chivian D."/>
            <person name="Pinel N."/>
            <person name="Gabster J.A."/>
            <person name="Dehal P.S."/>
            <person name="He Z."/>
            <person name="Yang Z.K."/>
            <person name="Yen H.C."/>
            <person name="Zhou J."/>
            <person name="Wall J.D."/>
            <person name="Hazen T.C."/>
            <person name="Arkin A.P."/>
            <person name="Stahl D.A."/>
        </authorList>
    </citation>
    <scope>NUCLEOTIDE SEQUENCE [LARGE SCALE GENOMIC DNA]</scope>
    <source>
        <strain>DP4</strain>
    </source>
</reference>
<accession>A1VDC3</accession>